<comment type="subunit">
    <text evidence="1">Homodimer and heterodimers.</text>
</comment>
<comment type="subcellular location">
    <subcellularLocation>
        <location evidence="1">Cell membrane</location>
        <topology evidence="1">Multi-pass membrane protein</topology>
    </subcellularLocation>
</comment>
<comment type="similarity">
    <text evidence="3">Belongs to the Casparian strip membrane proteins (CASP) family.</text>
</comment>
<sequence length="187" mass="19288">MVAAARVVSGVKAEGLLRGACAALAAAAALLLGLSTQTETVLLVRKKGTVKDVQALWVLAMAAASAAGYHLLQLLKCLYLGRGGGRALAWTCLLLDKACAYATFATTVAAAQACVVALDGAHALQWTKLCNIYTRFCEQVAGSLVLGMLAAVGTAVLSAASARNVFRHYYCSSHSPPAPPPETCDAH</sequence>
<organism>
    <name type="scientific">Zea mays</name>
    <name type="common">Maize</name>
    <dbReference type="NCBI Taxonomy" id="4577"/>
    <lineage>
        <taxon>Eukaryota</taxon>
        <taxon>Viridiplantae</taxon>
        <taxon>Streptophyta</taxon>
        <taxon>Embryophyta</taxon>
        <taxon>Tracheophyta</taxon>
        <taxon>Spermatophyta</taxon>
        <taxon>Magnoliopsida</taxon>
        <taxon>Liliopsida</taxon>
        <taxon>Poales</taxon>
        <taxon>Poaceae</taxon>
        <taxon>PACMAD clade</taxon>
        <taxon>Panicoideae</taxon>
        <taxon>Andropogonodae</taxon>
        <taxon>Andropogoneae</taxon>
        <taxon>Tripsacinae</taxon>
        <taxon>Zea</taxon>
    </lineage>
</organism>
<reference key="1">
    <citation type="journal article" date="2009" name="Plant Mol. Biol.">
        <title>Insights into corn genes derived from large-scale cDNA sequencing.</title>
        <authorList>
            <person name="Alexandrov N.N."/>
            <person name="Brover V.V."/>
            <person name="Freidin S."/>
            <person name="Troukhan M.E."/>
            <person name="Tatarinova T.V."/>
            <person name="Zhang H."/>
            <person name="Swaller T.J."/>
            <person name="Lu Y.-P."/>
            <person name="Bouck J."/>
            <person name="Flavell R.B."/>
            <person name="Feldmann K.A."/>
        </authorList>
    </citation>
    <scope>NUCLEOTIDE SEQUENCE [LARGE SCALE MRNA]</scope>
</reference>
<reference key="2">
    <citation type="journal article" date="2014" name="Plant Physiol.">
        <title>Functional and evolutionary analysis of the CASPARIAN STRIP MEMBRANE DOMAIN PROTEIN family.</title>
        <authorList>
            <person name="Roppolo D."/>
            <person name="Boeckmann B."/>
            <person name="Pfister A."/>
            <person name="Boutet E."/>
            <person name="Rubio M.C."/>
            <person name="Denervaud-Tendon V."/>
            <person name="Vermeer J.E."/>
            <person name="Gheyselinck J."/>
            <person name="Xenarios I."/>
            <person name="Geldner N."/>
        </authorList>
    </citation>
    <scope>GENE FAMILY</scope>
    <scope>NOMENCLATURE</scope>
</reference>
<accession>B6U769</accession>
<dbReference type="EMBL" id="EU973084">
    <property type="protein sequence ID" value="ACG45202.1"/>
    <property type="molecule type" value="mRNA"/>
</dbReference>
<dbReference type="RefSeq" id="NP_001151976.1">
    <property type="nucleotide sequence ID" value="NM_001158504.1"/>
</dbReference>
<dbReference type="SMR" id="B6U769"/>
<dbReference type="FunCoup" id="B6U769">
    <property type="interactions" value="73"/>
</dbReference>
<dbReference type="PaxDb" id="4577-GRMZM2G177095_P01"/>
<dbReference type="eggNOG" id="ENOG502S20T">
    <property type="taxonomic scope" value="Eukaryota"/>
</dbReference>
<dbReference type="InParanoid" id="B6U769"/>
<dbReference type="Proteomes" id="UP000007305">
    <property type="component" value="Unplaced"/>
</dbReference>
<dbReference type="ExpressionAtlas" id="B6U769">
    <property type="expression patterns" value="baseline and differential"/>
</dbReference>
<dbReference type="GO" id="GO:0005886">
    <property type="term" value="C:plasma membrane"/>
    <property type="evidence" value="ECO:0007669"/>
    <property type="project" value="UniProtKB-SubCell"/>
</dbReference>
<dbReference type="InterPro" id="IPR006459">
    <property type="entry name" value="CASP/CASPL"/>
</dbReference>
<dbReference type="InterPro" id="IPR006702">
    <property type="entry name" value="CASP_dom"/>
</dbReference>
<dbReference type="NCBIfam" id="TIGR01569">
    <property type="entry name" value="A_tha_TIGR01569"/>
    <property type="match status" value="1"/>
</dbReference>
<dbReference type="PANTHER" id="PTHR33573:SF30">
    <property type="entry name" value="CASP-LIKE PROTEIN 2C1-RELATED"/>
    <property type="match status" value="1"/>
</dbReference>
<dbReference type="PANTHER" id="PTHR33573">
    <property type="entry name" value="CASP-LIKE PROTEIN 4A4"/>
    <property type="match status" value="1"/>
</dbReference>
<dbReference type="Pfam" id="PF04535">
    <property type="entry name" value="CASP_dom"/>
    <property type="match status" value="1"/>
</dbReference>
<feature type="chain" id="PRO_0000391568" description="CASP-like protein 2C1">
    <location>
        <begin position="1"/>
        <end position="187"/>
    </location>
</feature>
<feature type="topological domain" description="Cytoplasmic" evidence="2">
    <location>
        <begin position="1"/>
        <end position="14"/>
    </location>
</feature>
<feature type="transmembrane region" description="Helical" evidence="2">
    <location>
        <begin position="15"/>
        <end position="35"/>
    </location>
</feature>
<feature type="topological domain" description="Extracellular" evidence="2">
    <location>
        <begin position="36"/>
        <end position="54"/>
    </location>
</feature>
<feature type="transmembrane region" description="Helical" evidence="2">
    <location>
        <begin position="55"/>
        <end position="75"/>
    </location>
</feature>
<feature type="topological domain" description="Cytoplasmic" evidence="2">
    <location>
        <begin position="76"/>
        <end position="97"/>
    </location>
</feature>
<feature type="transmembrane region" description="Helical" evidence="2">
    <location>
        <begin position="98"/>
        <end position="118"/>
    </location>
</feature>
<feature type="topological domain" description="Extracellular" evidence="2">
    <location>
        <begin position="119"/>
        <end position="139"/>
    </location>
</feature>
<feature type="transmembrane region" description="Helical" evidence="2">
    <location>
        <begin position="140"/>
        <end position="160"/>
    </location>
</feature>
<feature type="topological domain" description="Cytoplasmic" evidence="2">
    <location>
        <begin position="161"/>
        <end position="187"/>
    </location>
</feature>
<keyword id="KW-1003">Cell membrane</keyword>
<keyword id="KW-0472">Membrane</keyword>
<keyword id="KW-1185">Reference proteome</keyword>
<keyword id="KW-0812">Transmembrane</keyword>
<keyword id="KW-1133">Transmembrane helix</keyword>
<proteinExistence type="evidence at transcript level"/>
<evidence type="ECO:0000250" key="1"/>
<evidence type="ECO:0000255" key="2"/>
<evidence type="ECO:0000305" key="3"/>
<protein>
    <recommendedName>
        <fullName>CASP-like protein 2C1</fullName>
        <shortName>ZmCASPL2C1</shortName>
    </recommendedName>
</protein>
<name>CSPLD_MAIZE</name>